<comment type="function">
    <text evidence="3 4">Plays an essential role in chemotaxis signal transduction system in order to colonize the host stomach. May act as a phosphate sink to control the flow of phosphate to CheAY.</text>
</comment>
<comment type="disruption phenotype">
    <text evidence="3 4">Deletion shows a severe inhibitory effect on chemotaxis, although swarming is not completely abolished (PubMed:11535789). Mutant also shows defects in mouse colonization (PubMed:19332820).</text>
</comment>
<proteinExistence type="inferred from homology"/>
<sequence length="321" mass="36587">MADSLAGIDQVTSLHKNNELQLLCFRLGKNKDLYAVNVFKIREVVKYHGNLTIISHENNSLVEGLIIIRELTIPLIDMKKWFYYDSQNKNKDLRPYRIEKEKGEDDIVMICEFSRWTIGVRIYEADRILSKKWTEMEQSAGLGGSAGNNKLVSRTRYFDGRLVQVVDIEKMLIDVFPWIEDEKHNDLETLSKIHSNQCVLLADDSPSVLKTMQMILDKLGVKHIDFINGKTLLEHLFNPTTDVSNIGLIITDLEMPEASGFEVIKQVKNNPLTSKIPIVVNSSMSGSSNEDMARSLKADDFISKSNPKDIQRVVKQFLELA</sequence>
<keyword id="KW-0597">Phosphoprotein</keyword>
<keyword id="KW-1185">Reference proteome</keyword>
<evidence type="ECO:0000255" key="1">
    <source>
        <dbReference type="PROSITE-ProRule" id="PRU00052"/>
    </source>
</evidence>
<evidence type="ECO:0000255" key="2">
    <source>
        <dbReference type="PROSITE-ProRule" id="PRU00169"/>
    </source>
</evidence>
<evidence type="ECO:0000269" key="3">
    <source>
    </source>
</evidence>
<evidence type="ECO:0000269" key="4">
    <source>
    </source>
</evidence>
<evidence type="ECO:0000303" key="5">
    <source>
    </source>
</evidence>
<reference key="1">
    <citation type="journal article" date="1997" name="Nature">
        <title>The complete genome sequence of the gastric pathogen Helicobacter pylori.</title>
        <authorList>
            <person name="Tomb J.-F."/>
            <person name="White O."/>
            <person name="Kerlavage A.R."/>
            <person name="Clayton R.A."/>
            <person name="Sutton G.G."/>
            <person name="Fleischmann R.D."/>
            <person name="Ketchum K.A."/>
            <person name="Klenk H.-P."/>
            <person name="Gill S.R."/>
            <person name="Dougherty B.A."/>
            <person name="Nelson K.E."/>
            <person name="Quackenbush J."/>
            <person name="Zhou L."/>
            <person name="Kirkness E.F."/>
            <person name="Peterson S.N."/>
            <person name="Loftus B.J."/>
            <person name="Richardson D.L."/>
            <person name="Dodson R.J."/>
            <person name="Khalak H.G."/>
            <person name="Glodek A."/>
            <person name="McKenney K."/>
            <person name="FitzGerald L.M."/>
            <person name="Lee N."/>
            <person name="Adams M.D."/>
            <person name="Hickey E.K."/>
            <person name="Berg D.E."/>
            <person name="Gocayne J.D."/>
            <person name="Utterback T.R."/>
            <person name="Peterson J.D."/>
            <person name="Kelley J.M."/>
            <person name="Cotton M.D."/>
            <person name="Weidman J.F."/>
            <person name="Fujii C."/>
            <person name="Bowman C."/>
            <person name="Watthey L."/>
            <person name="Wallin E."/>
            <person name="Hayes W.S."/>
            <person name="Borodovsky M."/>
            <person name="Karp P.D."/>
            <person name="Smith H.O."/>
            <person name="Fraser C.M."/>
            <person name="Venter J.C."/>
        </authorList>
    </citation>
    <scope>NUCLEOTIDE SEQUENCE [LARGE SCALE GENOMIC DNA]</scope>
    <source>
        <strain>ATCC 700392 / 26695</strain>
    </source>
</reference>
<reference key="2">
    <citation type="journal article" date="2001" name="Microbiology">
        <title>Chemotaxis in the human gastric pathogen Helicobacter pylori: different roles for CheW and the three CheV paralogues, and evidence for CheV2 phosphorylation.</title>
        <authorList>
            <person name="Pittman M.S."/>
            <person name="Goodwin M."/>
            <person name="Kelly D.J."/>
        </authorList>
    </citation>
    <scope>FUNCTION</scope>
    <scope>DISRUPTION PHENOTYPE</scope>
</reference>
<reference key="3">
    <citation type="journal article" date="2009" name="Microbiology">
        <title>A fixed-time diffusion analysis method determines that the three cheV genes of Helicobacter pylori differentially affect motility.</title>
        <authorList>
            <person name="Lowenthal A.C."/>
            <person name="Simon C."/>
            <person name="Fair A.S."/>
            <person name="Mehmood K."/>
            <person name="Terry K."/>
            <person name="Anastasia S."/>
            <person name="Ottemann K.M."/>
        </authorList>
    </citation>
    <scope>FUNCTION</scope>
    <scope>DISRUPTION PHENOTYPE</scope>
</reference>
<accession>O24864</accession>
<feature type="chain" id="PRO_0000448749" description="Chemotaxis protein CheV1">
    <location>
        <begin position="1"/>
        <end position="321"/>
    </location>
</feature>
<feature type="domain" description="CheW-like" evidence="1">
    <location>
        <begin position="19"/>
        <end position="177"/>
    </location>
</feature>
<feature type="domain" description="Response regulatory" evidence="2">
    <location>
        <begin position="198"/>
        <end position="319"/>
    </location>
</feature>
<feature type="modified residue" description="4-aspartylphosphate" evidence="2">
    <location>
        <position position="252"/>
    </location>
</feature>
<name>CHEV1_HELPY</name>
<gene>
    <name evidence="5" type="primary">cheV1</name>
    <name type="ordered locus">HP_0019</name>
</gene>
<protein>
    <recommendedName>
        <fullName evidence="5">Chemotaxis protein CheV1</fullName>
    </recommendedName>
</protein>
<organism>
    <name type="scientific">Helicobacter pylori (strain ATCC 700392 / 26695)</name>
    <name type="common">Campylobacter pylori</name>
    <dbReference type="NCBI Taxonomy" id="85962"/>
    <lineage>
        <taxon>Bacteria</taxon>
        <taxon>Pseudomonadati</taxon>
        <taxon>Campylobacterota</taxon>
        <taxon>Epsilonproteobacteria</taxon>
        <taxon>Campylobacterales</taxon>
        <taxon>Helicobacteraceae</taxon>
        <taxon>Helicobacter</taxon>
    </lineage>
</organism>
<dbReference type="EMBL" id="AE000511">
    <property type="protein sequence ID" value="AAD07087.1"/>
    <property type="molecule type" value="Genomic_DNA"/>
</dbReference>
<dbReference type="PIR" id="C64522">
    <property type="entry name" value="C64522"/>
</dbReference>
<dbReference type="RefSeq" id="NP_206821.1">
    <property type="nucleotide sequence ID" value="NC_000915.1"/>
</dbReference>
<dbReference type="RefSeq" id="WP_000785454.1">
    <property type="nucleotide sequence ID" value="NC_018939.1"/>
</dbReference>
<dbReference type="SMR" id="O24864"/>
<dbReference type="DIP" id="DIP-3650N"/>
<dbReference type="IntAct" id="O24864">
    <property type="interactions" value="3"/>
</dbReference>
<dbReference type="MINT" id="O24864"/>
<dbReference type="STRING" id="85962.HP_0019"/>
<dbReference type="PaxDb" id="85962-C694_00090"/>
<dbReference type="EnsemblBacteria" id="AAD07087">
    <property type="protein sequence ID" value="AAD07087"/>
    <property type="gene ID" value="HP_0019"/>
</dbReference>
<dbReference type="KEGG" id="heo:C694_00090"/>
<dbReference type="KEGG" id="hpy:HP_0019"/>
<dbReference type="PATRIC" id="fig|85962.47.peg.18"/>
<dbReference type="eggNOG" id="COG0784">
    <property type="taxonomic scope" value="Bacteria"/>
</dbReference>
<dbReference type="eggNOG" id="COG0835">
    <property type="taxonomic scope" value="Bacteria"/>
</dbReference>
<dbReference type="InParanoid" id="O24864"/>
<dbReference type="OrthoDB" id="5477257at2"/>
<dbReference type="PhylomeDB" id="O24864"/>
<dbReference type="Proteomes" id="UP000000429">
    <property type="component" value="Chromosome"/>
</dbReference>
<dbReference type="GO" id="GO:0006935">
    <property type="term" value="P:chemotaxis"/>
    <property type="evidence" value="ECO:0000318"/>
    <property type="project" value="GO_Central"/>
</dbReference>
<dbReference type="GO" id="GO:0000160">
    <property type="term" value="P:phosphorelay signal transduction system"/>
    <property type="evidence" value="ECO:0007669"/>
    <property type="project" value="InterPro"/>
</dbReference>
<dbReference type="CDD" id="cd00588">
    <property type="entry name" value="CheW_like"/>
    <property type="match status" value="1"/>
</dbReference>
<dbReference type="Gene3D" id="3.40.50.2300">
    <property type="match status" value="1"/>
</dbReference>
<dbReference type="Gene3D" id="2.40.50.180">
    <property type="entry name" value="CheA-289, Domain 4"/>
    <property type="match status" value="1"/>
</dbReference>
<dbReference type="Gene3D" id="2.30.30.40">
    <property type="entry name" value="SH3 Domains"/>
    <property type="match status" value="1"/>
</dbReference>
<dbReference type="InterPro" id="IPR024181">
    <property type="entry name" value="Chemotax_regulator_CheV"/>
</dbReference>
<dbReference type="InterPro" id="IPR036061">
    <property type="entry name" value="CheW-like_dom_sf"/>
</dbReference>
<dbReference type="InterPro" id="IPR002545">
    <property type="entry name" value="CheW-lke_dom"/>
</dbReference>
<dbReference type="InterPro" id="IPR011006">
    <property type="entry name" value="CheY-like_superfamily"/>
</dbReference>
<dbReference type="InterPro" id="IPR001789">
    <property type="entry name" value="Sig_transdc_resp-reg_receiver"/>
</dbReference>
<dbReference type="PANTHER" id="PTHR47233">
    <property type="entry name" value="CHEMOTAXIS PROTEIN CHEV"/>
    <property type="match status" value="1"/>
</dbReference>
<dbReference type="PANTHER" id="PTHR47233:SF3">
    <property type="entry name" value="CHEMOTAXIS PROTEIN CHEV"/>
    <property type="match status" value="1"/>
</dbReference>
<dbReference type="Pfam" id="PF01584">
    <property type="entry name" value="CheW"/>
    <property type="match status" value="1"/>
</dbReference>
<dbReference type="Pfam" id="PF00072">
    <property type="entry name" value="Response_reg"/>
    <property type="match status" value="1"/>
</dbReference>
<dbReference type="PIRSF" id="PIRSF002867">
    <property type="entry name" value="CheV"/>
    <property type="match status" value="1"/>
</dbReference>
<dbReference type="SMART" id="SM00260">
    <property type="entry name" value="CheW"/>
    <property type="match status" value="1"/>
</dbReference>
<dbReference type="SMART" id="SM00448">
    <property type="entry name" value="REC"/>
    <property type="match status" value="1"/>
</dbReference>
<dbReference type="SUPFAM" id="SSF50341">
    <property type="entry name" value="CheW-like"/>
    <property type="match status" value="1"/>
</dbReference>
<dbReference type="SUPFAM" id="SSF52172">
    <property type="entry name" value="CheY-like"/>
    <property type="match status" value="1"/>
</dbReference>
<dbReference type="PROSITE" id="PS50851">
    <property type="entry name" value="CHEW"/>
    <property type="match status" value="1"/>
</dbReference>
<dbReference type="PROSITE" id="PS50110">
    <property type="entry name" value="RESPONSE_REGULATORY"/>
    <property type="match status" value="1"/>
</dbReference>